<reference key="1">
    <citation type="journal article" date="2006" name="BMC Genomics">
        <title>Complete genome sequence of Shigella flexneri 5b and comparison with Shigella flexneri 2a.</title>
        <authorList>
            <person name="Nie H."/>
            <person name="Yang F."/>
            <person name="Zhang X."/>
            <person name="Yang J."/>
            <person name="Chen L."/>
            <person name="Wang J."/>
            <person name="Xiong Z."/>
            <person name="Peng J."/>
            <person name="Sun L."/>
            <person name="Dong J."/>
            <person name="Xue Y."/>
            <person name="Xu X."/>
            <person name="Chen S."/>
            <person name="Yao Z."/>
            <person name="Shen Y."/>
            <person name="Jin Q."/>
        </authorList>
    </citation>
    <scope>NUCLEOTIDE SEQUENCE [LARGE SCALE GENOMIC DNA]</scope>
    <source>
        <strain>8401</strain>
    </source>
</reference>
<keyword id="KW-0324">Glycolysis</keyword>
<keyword id="KW-0413">Isomerase</keyword>
<accession>Q0SX17</accession>
<sequence>MLQVYLVRHGETQWNAERRIQGQSDSPLTAKGEQQAMQVATRAKELGITHIISSDLGRTRRTAEIIAQACGCDIIFDSRLRELNMGVLEKRHIDSLTEEEENWRRQLVNGTVDGRIPEGESMQELSDRVNAALESCRDLPQGSRPLLVSHGIALGCLVSTILGLPAWAERRLRLRNCSISRVDYQESLWLASGWVVETAGDISHLDAPALDELQR</sequence>
<name>GPMB_SHIF8</name>
<dbReference type="EC" id="5.4.2.-" evidence="1"/>
<dbReference type="EMBL" id="CP000266">
    <property type="protein sequence ID" value="ABF06398.1"/>
    <property type="molecule type" value="Genomic_DNA"/>
</dbReference>
<dbReference type="RefSeq" id="WP_000942344.1">
    <property type="nucleotide sequence ID" value="NC_008258.1"/>
</dbReference>
<dbReference type="SMR" id="Q0SX17"/>
<dbReference type="GeneID" id="93777450"/>
<dbReference type="KEGG" id="sfv:SFV_4429"/>
<dbReference type="HOGENOM" id="CLU_033323_9_5_6"/>
<dbReference type="UniPathway" id="UPA00109">
    <property type="reaction ID" value="UER00186"/>
</dbReference>
<dbReference type="Proteomes" id="UP000000659">
    <property type="component" value="Chromosome"/>
</dbReference>
<dbReference type="GO" id="GO:0005737">
    <property type="term" value="C:cytoplasm"/>
    <property type="evidence" value="ECO:0007669"/>
    <property type="project" value="TreeGrafter"/>
</dbReference>
<dbReference type="GO" id="GO:0016791">
    <property type="term" value="F:phosphatase activity"/>
    <property type="evidence" value="ECO:0007669"/>
    <property type="project" value="TreeGrafter"/>
</dbReference>
<dbReference type="GO" id="GO:0004619">
    <property type="term" value="F:phosphoglycerate mutase activity"/>
    <property type="evidence" value="ECO:0007669"/>
    <property type="project" value="UniProtKB-UniRule"/>
</dbReference>
<dbReference type="GO" id="GO:0006096">
    <property type="term" value="P:glycolytic process"/>
    <property type="evidence" value="ECO:0007669"/>
    <property type="project" value="UniProtKB-UniRule"/>
</dbReference>
<dbReference type="CDD" id="cd07067">
    <property type="entry name" value="HP_PGM_like"/>
    <property type="match status" value="1"/>
</dbReference>
<dbReference type="Gene3D" id="3.40.50.1240">
    <property type="entry name" value="Phosphoglycerate mutase-like"/>
    <property type="match status" value="1"/>
</dbReference>
<dbReference type="HAMAP" id="MF_01040">
    <property type="entry name" value="PGAM_GpmB"/>
    <property type="match status" value="1"/>
</dbReference>
<dbReference type="InterPro" id="IPR013078">
    <property type="entry name" value="His_Pase_superF_clade-1"/>
</dbReference>
<dbReference type="InterPro" id="IPR029033">
    <property type="entry name" value="His_PPase_superfam"/>
</dbReference>
<dbReference type="InterPro" id="IPR001345">
    <property type="entry name" value="PG/BPGM_mutase_AS"/>
</dbReference>
<dbReference type="InterPro" id="IPR050275">
    <property type="entry name" value="PGM_Phosphatase"/>
</dbReference>
<dbReference type="InterPro" id="IPR023086">
    <property type="entry name" value="Phosphoglycerate_mutase_GpmB"/>
</dbReference>
<dbReference type="NCBIfam" id="NF002901">
    <property type="entry name" value="PRK03482.1"/>
    <property type="match status" value="1"/>
</dbReference>
<dbReference type="PANTHER" id="PTHR48100">
    <property type="entry name" value="BROAD-SPECIFICITY PHOSPHATASE YOR283W-RELATED"/>
    <property type="match status" value="1"/>
</dbReference>
<dbReference type="PANTHER" id="PTHR48100:SF1">
    <property type="entry name" value="HISTIDINE PHOSPHATASE FAMILY PROTEIN-RELATED"/>
    <property type="match status" value="1"/>
</dbReference>
<dbReference type="Pfam" id="PF00300">
    <property type="entry name" value="His_Phos_1"/>
    <property type="match status" value="1"/>
</dbReference>
<dbReference type="SMART" id="SM00855">
    <property type="entry name" value="PGAM"/>
    <property type="match status" value="1"/>
</dbReference>
<dbReference type="SUPFAM" id="SSF53254">
    <property type="entry name" value="Phosphoglycerate mutase-like"/>
    <property type="match status" value="1"/>
</dbReference>
<dbReference type="PROSITE" id="PS00175">
    <property type="entry name" value="PG_MUTASE"/>
    <property type="match status" value="1"/>
</dbReference>
<evidence type="ECO:0000255" key="1">
    <source>
        <dbReference type="HAMAP-Rule" id="MF_01040"/>
    </source>
</evidence>
<gene>
    <name evidence="1" type="primary">gpmB</name>
    <name type="ordered locus">SFV_4429</name>
</gene>
<comment type="catalytic activity">
    <reaction evidence="1">
        <text>(2R)-2-phosphoglycerate = (2R)-3-phosphoglycerate</text>
        <dbReference type="Rhea" id="RHEA:15901"/>
        <dbReference type="ChEBI" id="CHEBI:58272"/>
        <dbReference type="ChEBI" id="CHEBI:58289"/>
    </reaction>
</comment>
<comment type="pathway">
    <text evidence="1">Carbohydrate degradation; glycolysis; pyruvate from D-glyceraldehyde 3-phosphate: step 3/5.</text>
</comment>
<comment type="similarity">
    <text evidence="1">Belongs to the phosphoglycerate mutase family. GpmB subfamily.</text>
</comment>
<proteinExistence type="inferred from homology"/>
<organism>
    <name type="scientific">Shigella flexneri serotype 5b (strain 8401)</name>
    <dbReference type="NCBI Taxonomy" id="373384"/>
    <lineage>
        <taxon>Bacteria</taxon>
        <taxon>Pseudomonadati</taxon>
        <taxon>Pseudomonadota</taxon>
        <taxon>Gammaproteobacteria</taxon>
        <taxon>Enterobacterales</taxon>
        <taxon>Enterobacteriaceae</taxon>
        <taxon>Shigella</taxon>
    </lineage>
</organism>
<feature type="chain" id="PRO_1000064133" description="Probable phosphoglycerate mutase GpmB">
    <location>
        <begin position="1"/>
        <end position="215"/>
    </location>
</feature>
<feature type="active site" description="Tele-phosphohistidine intermediate" evidence="1">
    <location>
        <position position="9"/>
    </location>
</feature>
<feature type="active site" description="Proton donor/acceptor" evidence="1">
    <location>
        <position position="82"/>
    </location>
</feature>
<feature type="binding site" evidence="1">
    <location>
        <begin position="8"/>
        <end position="15"/>
    </location>
    <ligand>
        <name>substrate</name>
    </ligand>
</feature>
<feature type="binding site" evidence="1">
    <location>
        <begin position="21"/>
        <end position="22"/>
    </location>
    <ligand>
        <name>substrate</name>
    </ligand>
</feature>
<feature type="binding site" evidence="1">
    <location>
        <position position="58"/>
    </location>
    <ligand>
        <name>substrate</name>
    </ligand>
</feature>
<feature type="binding site" evidence="1">
    <location>
        <position position="60"/>
    </location>
    <ligand>
        <name>substrate</name>
    </ligand>
</feature>
<feature type="binding site" evidence="1">
    <location>
        <begin position="82"/>
        <end position="85"/>
    </location>
    <ligand>
        <name>substrate</name>
    </ligand>
</feature>
<feature type="binding site" evidence="1">
    <location>
        <begin position="104"/>
        <end position="105"/>
    </location>
    <ligand>
        <name>substrate</name>
    </ligand>
</feature>
<feature type="binding site" evidence="1">
    <location>
        <begin position="151"/>
        <end position="152"/>
    </location>
    <ligand>
        <name>substrate</name>
    </ligand>
</feature>
<feature type="site" description="Transition state stabilizer" evidence="1">
    <location>
        <position position="150"/>
    </location>
</feature>
<protein>
    <recommendedName>
        <fullName evidence="1">Probable phosphoglycerate mutase GpmB</fullName>
        <ecNumber evidence="1">5.4.2.-</ecNumber>
    </recommendedName>
    <alternativeName>
        <fullName evidence="1">PGAM</fullName>
    </alternativeName>
    <alternativeName>
        <fullName evidence="1">Phosphoglyceromutase</fullName>
    </alternativeName>
</protein>